<protein>
    <recommendedName>
        <fullName evidence="4">Succinate dehydrogenase assembly factor 2, mitochondrial</fullName>
        <shortName evidence="4">SDH assembly factor 2</shortName>
    </recommendedName>
</protein>
<evidence type="ECO:0000255" key="1"/>
<evidence type="ECO:0000269" key="2">
    <source>
    </source>
</evidence>
<evidence type="ECO:0000269" key="3">
    <source>
    </source>
</evidence>
<evidence type="ECO:0000305" key="4"/>
<evidence type="ECO:0000312" key="5">
    <source>
        <dbReference type="Araport" id="AT5G51040"/>
    </source>
</evidence>
<gene>
    <name type="primary">SDHAF2</name>
    <name evidence="5" type="ordered locus">At5g51040</name>
</gene>
<reference key="1">
    <citation type="journal article" date="1999" name="DNA Res.">
        <title>Structural analysis of Arabidopsis thaliana chromosome 5. IX. Sequence features of the regions of 1,011,550 bp covered by seventeen P1 and TAC clones.</title>
        <authorList>
            <person name="Kaneko T."/>
            <person name="Katoh T."/>
            <person name="Sato S."/>
            <person name="Nakamura Y."/>
            <person name="Asamizu E."/>
            <person name="Kotani H."/>
            <person name="Miyajima N."/>
            <person name="Tabata S."/>
        </authorList>
    </citation>
    <scope>NUCLEOTIDE SEQUENCE [LARGE SCALE GENOMIC DNA]</scope>
    <source>
        <strain>cv. Columbia</strain>
    </source>
</reference>
<reference key="2">
    <citation type="journal article" date="2017" name="Plant J.">
        <title>Araport11: a complete reannotation of the Arabidopsis thaliana reference genome.</title>
        <authorList>
            <person name="Cheng C.Y."/>
            <person name="Krishnakumar V."/>
            <person name="Chan A.P."/>
            <person name="Thibaud-Nissen F."/>
            <person name="Schobel S."/>
            <person name="Town C.D."/>
        </authorList>
    </citation>
    <scope>GENOME REANNOTATION</scope>
    <source>
        <strain>cv. Columbia</strain>
    </source>
</reference>
<reference key="3">
    <citation type="submission" date="2006-05" db="EMBL/GenBank/DDBJ databases">
        <title>Arabidopsis ORF clones.</title>
        <authorList>
            <person name="Kim C.J."/>
            <person name="Chen H."/>
            <person name="Quinitio C."/>
            <person name="Shinn P."/>
            <person name="Ecker J.R."/>
        </authorList>
    </citation>
    <scope>NUCLEOTIDE SEQUENCE [LARGE SCALE MRNA]</scope>
    <source>
        <strain>cv. Columbia</strain>
    </source>
</reference>
<reference key="4">
    <citation type="submission" date="2006-07" db="EMBL/GenBank/DDBJ databases">
        <title>Large-scale analysis of RIKEN Arabidopsis full-length (RAFL) cDNAs.</title>
        <authorList>
            <person name="Totoki Y."/>
            <person name="Seki M."/>
            <person name="Ishida J."/>
            <person name="Nakajima M."/>
            <person name="Enju A."/>
            <person name="Kamiya A."/>
            <person name="Narusaka M."/>
            <person name="Shin-i T."/>
            <person name="Nakagawa M."/>
            <person name="Sakamoto N."/>
            <person name="Oishi K."/>
            <person name="Kohara Y."/>
            <person name="Kobayashi M."/>
            <person name="Toyoda A."/>
            <person name="Sakaki Y."/>
            <person name="Sakurai T."/>
            <person name="Iida K."/>
            <person name="Akiyama K."/>
            <person name="Satou M."/>
            <person name="Toyoda T."/>
            <person name="Konagaya A."/>
            <person name="Carninci P."/>
            <person name="Kawai J."/>
            <person name="Hayashizaki Y."/>
            <person name="Shinozaki K."/>
        </authorList>
    </citation>
    <scope>NUCLEOTIDE SEQUENCE [LARGE SCALE MRNA]</scope>
    <source>
        <strain>cv. Columbia</strain>
    </source>
</reference>
<reference key="5">
    <citation type="submission" date="2002-03" db="EMBL/GenBank/DDBJ databases">
        <title>Full-length cDNA from Arabidopsis thaliana.</title>
        <authorList>
            <person name="Brover V.V."/>
            <person name="Troukhan M.E."/>
            <person name="Alexandrov N.A."/>
            <person name="Lu Y.-P."/>
            <person name="Flavell R.B."/>
            <person name="Feldmann K.A."/>
        </authorList>
    </citation>
    <scope>NUCLEOTIDE SEQUENCE [LARGE SCALE MRNA]</scope>
</reference>
<reference key="6">
    <citation type="journal article" date="2013" name="Plant J.">
        <title>Succinate dehydrogenase assembly factor 2 is needed for assembly and activity of mitochondrial complex II and for normal root elongation in Arabidopsis.</title>
        <authorList>
            <person name="Huang S."/>
            <person name="Taylor N.L."/>
            <person name="Stroher E."/>
            <person name="Fenske R."/>
            <person name="Millar A.H."/>
        </authorList>
    </citation>
    <scope>IDENTIFICATION BY MASS SPECTROMETRY</scope>
    <scope>FUNCTION</scope>
    <scope>DISRUPTION PHENOTYPE</scope>
</reference>
<reference key="7">
    <citation type="journal article" date="2013" name="Plant Signal. Behav.">
        <title>Sequence diversity and conservation in factors influencing succinate dehydrogenase flavinylation.</title>
        <authorList>
            <person name="Huang S."/>
            <person name="Millar A.H."/>
        </authorList>
    </citation>
    <scope>FUNCTION</scope>
</reference>
<keyword id="KW-0025">Alternative splicing</keyword>
<keyword id="KW-0143">Chaperone</keyword>
<keyword id="KW-0496">Mitochondrion</keyword>
<keyword id="KW-1185">Reference proteome</keyword>
<keyword id="KW-0809">Transit peptide</keyword>
<feature type="transit peptide" description="Mitochondrion" evidence="1">
    <location>
        <begin position="1"/>
        <end position="21"/>
    </location>
</feature>
<feature type="chain" id="PRO_0000431760" description="Succinate dehydrogenase assembly factor 2, mitochondrial" evidence="1">
    <location>
        <begin position="22"/>
        <end position="188"/>
    </location>
</feature>
<feature type="sequence conflict" description="In Ref. 5; AAM64715." evidence="4" ref="5">
    <original>A</original>
    <variation>T</variation>
    <location>
        <position position="182"/>
    </location>
</feature>
<comment type="function">
    <text evidence="2 3">Plays an essential role in the assembly of succinate dehydrogenase (SDH), an enzyme complex (also referred to as respiratory complex II) that is a component of both the tricarboxylic acid (TCA) cycle and the mitochondrial electron transport chain, and which couples the oxidation of succinate to fumarate with the reduction of ubiquinone (coenzyme Q) to ubiquinol (PubMed:23036115). Required for flavinylation (covalent attachment of FAD) of the flavoprotein subunit of the SDH catalytic dimer (PubMed:23036115, PubMed:23154507).</text>
</comment>
<comment type="subcellular location">
    <subcellularLocation>
        <location evidence="1">Mitochondrion</location>
    </subcellularLocation>
</comment>
<comment type="alternative products">
    <event type="alternative splicing"/>
    <isoform>
        <id>Q9FI44-1</id>
        <name>1</name>
        <sequence type="displayed"/>
    </isoform>
    <text>A number of isoforms are produced. According to EST sequences.</text>
</comment>
<comment type="disruption phenotype">
    <text evidence="2">Inhibition of primary root elongation and early lateral root emergence.</text>
</comment>
<comment type="similarity">
    <text evidence="4">Belongs to the SDHAF2 family.</text>
</comment>
<accession>Q9FI44</accession>
<accession>Q8LBK3</accession>
<name>SDAF2_ARATH</name>
<organism>
    <name type="scientific">Arabidopsis thaliana</name>
    <name type="common">Mouse-ear cress</name>
    <dbReference type="NCBI Taxonomy" id="3702"/>
    <lineage>
        <taxon>Eukaryota</taxon>
        <taxon>Viridiplantae</taxon>
        <taxon>Streptophyta</taxon>
        <taxon>Embryophyta</taxon>
        <taxon>Tracheophyta</taxon>
        <taxon>Spermatophyta</taxon>
        <taxon>Magnoliopsida</taxon>
        <taxon>eudicotyledons</taxon>
        <taxon>Gunneridae</taxon>
        <taxon>Pentapetalae</taxon>
        <taxon>rosids</taxon>
        <taxon>malvids</taxon>
        <taxon>Brassicales</taxon>
        <taxon>Brassicaceae</taxon>
        <taxon>Camelineae</taxon>
        <taxon>Arabidopsis</taxon>
    </lineage>
</organism>
<dbReference type="EMBL" id="AB017063">
    <property type="protein sequence ID" value="BAB08750.1"/>
    <property type="molecule type" value="Genomic_DNA"/>
</dbReference>
<dbReference type="EMBL" id="CP002688">
    <property type="protein sequence ID" value="AED96024.1"/>
    <property type="molecule type" value="Genomic_DNA"/>
</dbReference>
<dbReference type="EMBL" id="BT025542">
    <property type="protein sequence ID" value="ABF58960.1"/>
    <property type="molecule type" value="mRNA"/>
</dbReference>
<dbReference type="EMBL" id="AK229201">
    <property type="protein sequence ID" value="BAF01071.1"/>
    <property type="molecule type" value="mRNA"/>
</dbReference>
<dbReference type="EMBL" id="AY087157">
    <property type="protein sequence ID" value="AAM64715.1"/>
    <property type="molecule type" value="mRNA"/>
</dbReference>
<dbReference type="RefSeq" id="NP_199917.1">
    <molecule id="Q9FI44-1"/>
    <property type="nucleotide sequence ID" value="NM_124483.3"/>
</dbReference>
<dbReference type="SMR" id="Q9FI44"/>
<dbReference type="FunCoup" id="Q9FI44">
    <property type="interactions" value="49"/>
</dbReference>
<dbReference type="STRING" id="3702.Q9FI44"/>
<dbReference type="PaxDb" id="3702-AT5G51040.3"/>
<dbReference type="ProteomicsDB" id="232922">
    <molecule id="Q9FI44-1"/>
</dbReference>
<dbReference type="EnsemblPlants" id="AT5G51040.1">
    <molecule id="Q9FI44-1"/>
    <property type="protein sequence ID" value="AT5G51040.1"/>
    <property type="gene ID" value="AT5G51040"/>
</dbReference>
<dbReference type="GeneID" id="835177"/>
<dbReference type="Gramene" id="AT5G51040.1">
    <molecule id="Q9FI44-1"/>
    <property type="protein sequence ID" value="AT5G51040.1"/>
    <property type="gene ID" value="AT5G51040"/>
</dbReference>
<dbReference type="KEGG" id="ath:AT5G51040"/>
<dbReference type="Araport" id="AT5G51040"/>
<dbReference type="TAIR" id="AT5G51040">
    <property type="gene designation" value="SDHAF2"/>
</dbReference>
<dbReference type="eggNOG" id="KOG3326">
    <property type="taxonomic scope" value="Eukaryota"/>
</dbReference>
<dbReference type="InParanoid" id="Q9FI44"/>
<dbReference type="PhylomeDB" id="Q9FI44"/>
<dbReference type="PRO" id="PR:Q9FI44"/>
<dbReference type="Proteomes" id="UP000006548">
    <property type="component" value="Chromosome 5"/>
</dbReference>
<dbReference type="ExpressionAtlas" id="Q9FI44">
    <property type="expression patterns" value="baseline and differential"/>
</dbReference>
<dbReference type="GO" id="GO:0005739">
    <property type="term" value="C:mitochondrion"/>
    <property type="evidence" value="ECO:0007669"/>
    <property type="project" value="UniProtKB-SubCell"/>
</dbReference>
<dbReference type="FunFam" id="1.10.150.250:FF:000003">
    <property type="entry name" value="Succinate dehydrogenase assembly factor"/>
    <property type="match status" value="1"/>
</dbReference>
<dbReference type="Gene3D" id="1.10.150.250">
    <property type="entry name" value="Flavinator of succinate dehydrogenase"/>
    <property type="match status" value="1"/>
</dbReference>
<dbReference type="InterPro" id="IPR005631">
    <property type="entry name" value="SDH"/>
</dbReference>
<dbReference type="InterPro" id="IPR036714">
    <property type="entry name" value="SDH_sf"/>
</dbReference>
<dbReference type="PANTHER" id="PTHR12469">
    <property type="entry name" value="PROTEIN EMI5 HOMOLOG, MITOCHONDRIAL"/>
    <property type="match status" value="1"/>
</dbReference>
<dbReference type="PANTHER" id="PTHR12469:SF2">
    <property type="entry name" value="SUCCINATE DEHYDROGENASE ASSEMBLY FACTOR 2, MITOCHONDRIAL"/>
    <property type="match status" value="1"/>
</dbReference>
<dbReference type="Pfam" id="PF03937">
    <property type="entry name" value="Sdh5"/>
    <property type="match status" value="1"/>
</dbReference>
<dbReference type="SUPFAM" id="SSF109910">
    <property type="entry name" value="YgfY-like"/>
    <property type="match status" value="1"/>
</dbReference>
<proteinExistence type="evidence at protein level"/>
<sequence>MATRKALINVHRIIRSTAVVGRSSIIPAAANRSYPIIFRNGVDLGARFFCENTASAQNFDIDLSNEENKRRTINRLLYRSKQRGFLELDLVLGNWVEENVNSMDENGVKSLIHVLNLENPDLWKWLTEQEQPPEAVSSNPVFSALHEKVMKNLNKHAAPETRAAAGQPWVRGWDDFKRGRDAPISGNQ</sequence>